<evidence type="ECO:0000255" key="1">
    <source>
        <dbReference type="PROSITE-ProRule" id="PRU00062"/>
    </source>
</evidence>
<evidence type="ECO:0000255" key="2">
    <source>
        <dbReference type="PROSITE-ProRule" id="PRU00795"/>
    </source>
</evidence>
<evidence type="ECO:0000256" key="3">
    <source>
        <dbReference type="SAM" id="MobiDB-lite"/>
    </source>
</evidence>
<evidence type="ECO:0000305" key="4"/>
<evidence type="ECO:0007744" key="5">
    <source>
    </source>
</evidence>
<evidence type="ECO:0007744" key="6">
    <source>
    </source>
</evidence>
<evidence type="ECO:0007744" key="7">
    <source>
    </source>
</evidence>
<accession>P53046</accession>
<accession>Q92326</accession>
<feature type="chain" id="PRO_0000080968" description="RHO1 GDP-GTP exchange protein 1">
    <location>
        <begin position="1"/>
        <end position="1155"/>
    </location>
</feature>
<feature type="domain" description="DH" evidence="1">
    <location>
        <begin position="464"/>
        <end position="651"/>
    </location>
</feature>
<feature type="domain" description="CNH" evidence="2">
    <location>
        <begin position="842"/>
        <end position="1137"/>
    </location>
</feature>
<feature type="region of interest" description="Disordered" evidence="3">
    <location>
        <begin position="100"/>
        <end position="249"/>
    </location>
</feature>
<feature type="compositionally biased region" description="Polar residues" evidence="3">
    <location>
        <begin position="100"/>
        <end position="143"/>
    </location>
</feature>
<feature type="compositionally biased region" description="Low complexity" evidence="3">
    <location>
        <begin position="155"/>
        <end position="167"/>
    </location>
</feature>
<feature type="compositionally biased region" description="Low complexity" evidence="3">
    <location>
        <begin position="190"/>
        <end position="227"/>
    </location>
</feature>
<feature type="compositionally biased region" description="Basic residues" evidence="3">
    <location>
        <begin position="228"/>
        <end position="243"/>
    </location>
</feature>
<feature type="modified residue" description="N-acetylmethionine" evidence="7">
    <location>
        <position position="1"/>
    </location>
</feature>
<feature type="modified residue" description="Phosphoserine" evidence="6">
    <location>
        <position position="154"/>
    </location>
</feature>
<feature type="modified residue" description="Phosphoserine" evidence="6">
    <location>
        <position position="155"/>
    </location>
</feature>
<feature type="modified residue" description="Phosphothreonine" evidence="6">
    <location>
        <position position="180"/>
    </location>
</feature>
<feature type="modified residue" description="Phosphoserine" evidence="5">
    <location>
        <position position="433"/>
    </location>
</feature>
<feature type="sequence conflict" description="In Ref. 1; AAA99813 and 4; BAA11827." evidence="4" ref="1 4">
    <original>T</original>
    <variation>P</variation>
    <location>
        <position position="214"/>
    </location>
</feature>
<feature type="sequence conflict" description="In Ref. 4; BAA11827." evidence="4" ref="4">
    <original>L</original>
    <variation>V</variation>
    <location>
        <position position="250"/>
    </location>
</feature>
<feature type="sequence conflict" description="In Ref. 4; BAA11827." evidence="4" ref="4">
    <original>KLS</original>
    <variation>QLG</variation>
    <location>
        <begin position="279"/>
        <end position="281"/>
    </location>
</feature>
<feature type="sequence conflict" description="In Ref. 4; BAA11827." evidence="4" ref="4">
    <original>Y</original>
    <variation>N</variation>
    <location>
        <position position="385"/>
    </location>
</feature>
<feature type="sequence conflict" description="In Ref. 4; BAA11827." evidence="4" ref="4">
    <original>H</original>
    <variation>Y</variation>
    <location>
        <position position="515"/>
    </location>
</feature>
<feature type="sequence conflict" description="In Ref. 4; BAA11827." evidence="4" ref="4">
    <original>F</original>
    <variation>L</variation>
    <location>
        <position position="557"/>
    </location>
</feature>
<feature type="sequence conflict" description="In Ref. 4; BAA11827." evidence="4" ref="4">
    <original>R</original>
    <variation>C</variation>
    <location>
        <position position="844"/>
    </location>
</feature>
<feature type="sequence conflict" description="In Ref. 4; BAA11827." evidence="4" ref="4">
    <original>H</original>
    <variation>S</variation>
    <location>
        <position position="852"/>
    </location>
</feature>
<feature type="sequence conflict" description="In Ref. 4; BAA11827." evidence="4" ref="4">
    <original>K</original>
    <variation>N</variation>
    <location>
        <position position="897"/>
    </location>
</feature>
<feature type="sequence conflict" description="In Ref. 4; BAA11827." evidence="4" ref="4">
    <original>A</original>
    <variation>T</variation>
    <location>
        <position position="959"/>
    </location>
</feature>
<feature type="sequence conflict" description="In Ref. 2; CAA97072." evidence="4" ref="2">
    <original>V</original>
    <variation>A</variation>
    <location>
        <position position="960"/>
    </location>
</feature>
<feature type="sequence conflict" description="In Ref. 4; BAA11827." evidence="4" ref="4">
    <original>Q</original>
    <variation>K</variation>
    <location>
        <position position="961"/>
    </location>
</feature>
<feature type="sequence conflict" description="In Ref. 4; BAA11827." evidence="4" ref="4">
    <original>N</original>
    <variation>D</variation>
    <location>
        <position position="1037"/>
    </location>
</feature>
<feature type="sequence conflict" description="In Ref. 4; BAA11827." evidence="4" ref="4">
    <original>E</original>
    <variation>G</variation>
    <location>
        <position position="1151"/>
    </location>
</feature>
<comment type="function">
    <text>Stimulates the exchange of RHO1 GDP-bound form into GTP-bound form.</text>
</comment>
<gene>
    <name type="primary">ROM1</name>
    <name type="synonym">SKC1</name>
    <name type="ordered locus">YGR070W</name>
</gene>
<protein>
    <recommendedName>
        <fullName>RHO1 GDP-GTP exchange protein 1</fullName>
    </recommendedName>
    <alternativeName>
        <fullName>Protein kinase C suppressor SKC1</fullName>
    </alternativeName>
</protein>
<reference key="1">
    <citation type="submission" date="1996-08" db="EMBL/GenBank/DDBJ databases">
        <title>Isolation of a novel pkc1 mutant and two of its multicopy suppressors from Saccharomyces cerevisiae.</title>
        <authorList>
            <person name="Jacoby J.J."/>
            <person name="Kirchrath L."/>
            <person name="Heinisch J.J."/>
        </authorList>
    </citation>
    <scope>NUCLEOTIDE SEQUENCE [GENOMIC DNA]</scope>
    <source>
        <strain>ATCC 204508 / S288c</strain>
    </source>
</reference>
<reference key="2">
    <citation type="journal article" date="1997" name="Nature">
        <title>The nucleotide sequence of Saccharomyces cerevisiae chromosome VII.</title>
        <authorList>
            <person name="Tettelin H."/>
            <person name="Agostoni-Carbone M.L."/>
            <person name="Albermann K."/>
            <person name="Albers M."/>
            <person name="Arroyo J."/>
            <person name="Backes U."/>
            <person name="Barreiros T."/>
            <person name="Bertani I."/>
            <person name="Bjourson A.J."/>
            <person name="Brueckner M."/>
            <person name="Bruschi C.V."/>
            <person name="Carignani G."/>
            <person name="Castagnoli L."/>
            <person name="Cerdan E."/>
            <person name="Clemente M.L."/>
            <person name="Coblenz A."/>
            <person name="Coglievina M."/>
            <person name="Coissac E."/>
            <person name="Defoor E."/>
            <person name="Del Bino S."/>
            <person name="Delius H."/>
            <person name="Delneri D."/>
            <person name="de Wergifosse P."/>
            <person name="Dujon B."/>
            <person name="Durand P."/>
            <person name="Entian K.-D."/>
            <person name="Eraso P."/>
            <person name="Escribano V."/>
            <person name="Fabiani L."/>
            <person name="Fartmann B."/>
            <person name="Feroli F."/>
            <person name="Feuermann M."/>
            <person name="Frontali L."/>
            <person name="Garcia-Gonzalez M."/>
            <person name="Garcia-Saez M.I."/>
            <person name="Goffeau A."/>
            <person name="Guerreiro P."/>
            <person name="Hani J."/>
            <person name="Hansen M."/>
            <person name="Hebling U."/>
            <person name="Hernandez K."/>
            <person name="Heumann K."/>
            <person name="Hilger F."/>
            <person name="Hofmann B."/>
            <person name="Indge K.J."/>
            <person name="James C.M."/>
            <person name="Klima R."/>
            <person name="Koetter P."/>
            <person name="Kramer B."/>
            <person name="Kramer W."/>
            <person name="Lauquin G."/>
            <person name="Leuther H."/>
            <person name="Louis E.J."/>
            <person name="Maillier E."/>
            <person name="Marconi A."/>
            <person name="Martegani E."/>
            <person name="Mazon M.J."/>
            <person name="Mazzoni C."/>
            <person name="McReynolds A.D.K."/>
            <person name="Melchioretto P."/>
            <person name="Mewes H.-W."/>
            <person name="Minenkova O."/>
            <person name="Mueller-Auer S."/>
            <person name="Nawrocki A."/>
            <person name="Netter P."/>
            <person name="Neu R."/>
            <person name="Nombela C."/>
            <person name="Oliver S.G."/>
            <person name="Panzeri L."/>
            <person name="Paoluzi S."/>
            <person name="Plevani P."/>
            <person name="Portetelle D."/>
            <person name="Portillo F."/>
            <person name="Potier S."/>
            <person name="Purnelle B."/>
            <person name="Rieger M."/>
            <person name="Riles L."/>
            <person name="Rinaldi T."/>
            <person name="Robben J."/>
            <person name="Rodrigues-Pousada C."/>
            <person name="Rodriguez-Belmonte E."/>
            <person name="Rodriguez-Torres A.M."/>
            <person name="Rose M."/>
            <person name="Ruzzi M."/>
            <person name="Saliola M."/>
            <person name="Sanchez-Perez M."/>
            <person name="Schaefer B."/>
            <person name="Schaefer M."/>
            <person name="Scharfe M."/>
            <person name="Schmidheini T."/>
            <person name="Schreer A."/>
            <person name="Skala J."/>
            <person name="Souciet J.-L."/>
            <person name="Steensma H.Y."/>
            <person name="Talla E."/>
            <person name="Thierry A."/>
            <person name="Vandenbol M."/>
            <person name="van der Aart Q.J.M."/>
            <person name="Van Dyck L."/>
            <person name="Vanoni M."/>
            <person name="Verhasselt P."/>
            <person name="Voet M."/>
            <person name="Volckaert G."/>
            <person name="Wambutt R."/>
            <person name="Watson M.D."/>
            <person name="Weber N."/>
            <person name="Wedler E."/>
            <person name="Wedler H."/>
            <person name="Wipfli P."/>
            <person name="Wolf K."/>
            <person name="Wright L.F."/>
            <person name="Zaccaria P."/>
            <person name="Zimmermann M."/>
            <person name="Zollner A."/>
            <person name="Kleine K."/>
        </authorList>
    </citation>
    <scope>NUCLEOTIDE SEQUENCE [LARGE SCALE GENOMIC DNA]</scope>
    <source>
        <strain>ATCC 204508 / S288c</strain>
    </source>
</reference>
<reference key="3">
    <citation type="journal article" date="2014" name="G3 (Bethesda)">
        <title>The reference genome sequence of Saccharomyces cerevisiae: Then and now.</title>
        <authorList>
            <person name="Engel S.R."/>
            <person name="Dietrich F.S."/>
            <person name="Fisk D.G."/>
            <person name="Binkley G."/>
            <person name="Balakrishnan R."/>
            <person name="Costanzo M.C."/>
            <person name="Dwight S.S."/>
            <person name="Hitz B.C."/>
            <person name="Karra K."/>
            <person name="Nash R.S."/>
            <person name="Weng S."/>
            <person name="Wong E.D."/>
            <person name="Lloyd P."/>
            <person name="Skrzypek M.S."/>
            <person name="Miyasato S.R."/>
            <person name="Simison M."/>
            <person name="Cherry J.M."/>
        </authorList>
    </citation>
    <scope>GENOME REANNOTATION</scope>
    <scope>SEQUENCE REVISION TO 960</scope>
    <source>
        <strain>ATCC 204508 / S288c</strain>
    </source>
</reference>
<reference key="4">
    <citation type="journal article" date="1996" name="EMBO J.">
        <title>Rom1p and Rom2p are GDP/GTP exchange proteins (GEPs) for the Rho1p small GTP binding protein in Saccharomyces cerevisiae.</title>
        <authorList>
            <person name="Ozaki K."/>
            <person name="Tanaka K."/>
            <person name="Imamura H."/>
            <person name="Hihara T."/>
            <person name="Kameyama T."/>
            <person name="Nonaka H."/>
            <person name="Hirano H."/>
            <person name="Matsuura Y."/>
            <person name="Takai Y."/>
        </authorList>
    </citation>
    <scope>NUCLEOTIDE SEQUENCE [GENOMIC DNA] OF 143-1155</scope>
    <scope>CHARACTERIZATION</scope>
</reference>
<reference key="5">
    <citation type="journal article" date="2008" name="Mol. Cell. Proteomics">
        <title>A multidimensional chromatography technology for in-depth phosphoproteome analysis.</title>
        <authorList>
            <person name="Albuquerque C.P."/>
            <person name="Smolka M.B."/>
            <person name="Payne S.H."/>
            <person name="Bafna V."/>
            <person name="Eng J."/>
            <person name="Zhou H."/>
        </authorList>
    </citation>
    <scope>PHOSPHORYLATION [LARGE SCALE ANALYSIS] AT SER-433</scope>
    <scope>IDENTIFICATION BY MASS SPECTROMETRY [LARGE SCALE ANALYSIS]</scope>
</reference>
<reference key="6">
    <citation type="journal article" date="2009" name="Science">
        <title>Global analysis of Cdk1 substrate phosphorylation sites provides insights into evolution.</title>
        <authorList>
            <person name="Holt L.J."/>
            <person name="Tuch B.B."/>
            <person name="Villen J."/>
            <person name="Johnson A.D."/>
            <person name="Gygi S.P."/>
            <person name="Morgan D.O."/>
        </authorList>
    </citation>
    <scope>PHOSPHORYLATION [LARGE SCALE ANALYSIS] AT SER-154; SER-155 AND THR-180</scope>
    <scope>IDENTIFICATION BY MASS SPECTROMETRY [LARGE SCALE ANALYSIS]</scope>
</reference>
<reference key="7">
    <citation type="journal article" date="2012" name="Proc. Natl. Acad. Sci. U.S.A.">
        <title>N-terminal acetylome analyses and functional insights of the N-terminal acetyltransferase NatB.</title>
        <authorList>
            <person name="Van Damme P."/>
            <person name="Lasa M."/>
            <person name="Polevoda B."/>
            <person name="Gazquez C."/>
            <person name="Elosegui-Artola A."/>
            <person name="Kim D.S."/>
            <person name="De Juan-Pardo E."/>
            <person name="Demeyer K."/>
            <person name="Hole K."/>
            <person name="Larrea E."/>
            <person name="Timmerman E."/>
            <person name="Prieto J."/>
            <person name="Arnesen T."/>
            <person name="Sherman F."/>
            <person name="Gevaert K."/>
            <person name="Aldabe R."/>
        </authorList>
    </citation>
    <scope>ACETYLATION [LARGE SCALE ANALYSIS] AT MET-1</scope>
    <scope>IDENTIFICATION BY MASS SPECTROMETRY [LARGE SCALE ANALYSIS]</scope>
</reference>
<dbReference type="EMBL" id="U55000">
    <property type="protein sequence ID" value="AAA99813.1"/>
    <property type="molecule type" value="Genomic_DNA"/>
</dbReference>
<dbReference type="EMBL" id="Z72855">
    <property type="protein sequence ID" value="CAA97072.1"/>
    <property type="molecule type" value="Genomic_DNA"/>
</dbReference>
<dbReference type="EMBL" id="D83171">
    <property type="protein sequence ID" value="BAA11827.1"/>
    <property type="molecule type" value="Genomic_DNA"/>
</dbReference>
<dbReference type="EMBL" id="BK006941">
    <property type="protein sequence ID" value="DAA08164.2"/>
    <property type="molecule type" value="Genomic_DNA"/>
</dbReference>
<dbReference type="PIR" id="S64365">
    <property type="entry name" value="S64365"/>
</dbReference>
<dbReference type="RefSeq" id="NP_011584.2">
    <property type="nucleotide sequence ID" value="NM_001181199.2"/>
</dbReference>
<dbReference type="SMR" id="P53046"/>
<dbReference type="BioGRID" id="33313">
    <property type="interactions" value="64"/>
</dbReference>
<dbReference type="DIP" id="DIP-6270N"/>
<dbReference type="FunCoup" id="P53046">
    <property type="interactions" value="243"/>
</dbReference>
<dbReference type="IntAct" id="P53046">
    <property type="interactions" value="6"/>
</dbReference>
<dbReference type="MINT" id="P53046"/>
<dbReference type="STRING" id="4932.YGR070W"/>
<dbReference type="iPTMnet" id="P53046"/>
<dbReference type="PaxDb" id="4932-YGR070W"/>
<dbReference type="PeptideAtlas" id="P53046"/>
<dbReference type="EnsemblFungi" id="YGR070W_mRNA">
    <property type="protein sequence ID" value="YGR070W"/>
    <property type="gene ID" value="YGR070W"/>
</dbReference>
<dbReference type="GeneID" id="852961"/>
<dbReference type="KEGG" id="sce:YGR070W"/>
<dbReference type="AGR" id="SGD:S000003302"/>
<dbReference type="SGD" id="S000003302">
    <property type="gene designation" value="ROM1"/>
</dbReference>
<dbReference type="VEuPathDB" id="FungiDB:YGR070W"/>
<dbReference type="eggNOG" id="KOG4305">
    <property type="taxonomic scope" value="Eukaryota"/>
</dbReference>
<dbReference type="GeneTree" id="ENSGT00940000176600"/>
<dbReference type="HOGENOM" id="CLU_001251_0_0_1"/>
<dbReference type="InParanoid" id="P53046"/>
<dbReference type="OMA" id="CFRQKII"/>
<dbReference type="OrthoDB" id="660555at2759"/>
<dbReference type="BioCyc" id="YEAST:G3O-30783-MONOMER"/>
<dbReference type="BioGRID-ORCS" id="852961">
    <property type="hits" value="0 hits in 10 CRISPR screens"/>
</dbReference>
<dbReference type="PRO" id="PR:P53046"/>
<dbReference type="Proteomes" id="UP000002311">
    <property type="component" value="Chromosome VII"/>
</dbReference>
<dbReference type="RNAct" id="P53046">
    <property type="molecule type" value="protein"/>
</dbReference>
<dbReference type="GO" id="GO:0032153">
    <property type="term" value="C:cell division site"/>
    <property type="evidence" value="ECO:0000318"/>
    <property type="project" value="GO_Central"/>
</dbReference>
<dbReference type="GO" id="GO:0071944">
    <property type="term" value="C:cell periphery"/>
    <property type="evidence" value="ECO:0000318"/>
    <property type="project" value="GO_Central"/>
</dbReference>
<dbReference type="GO" id="GO:0005737">
    <property type="term" value="C:cytoplasm"/>
    <property type="evidence" value="ECO:0000314"/>
    <property type="project" value="SGD"/>
</dbReference>
<dbReference type="GO" id="GO:0005085">
    <property type="term" value="F:guanyl-nucleotide exchange factor activity"/>
    <property type="evidence" value="ECO:0000316"/>
    <property type="project" value="SGD"/>
</dbReference>
<dbReference type="GO" id="GO:1903338">
    <property type="term" value="P:regulation of cell wall organization or biogenesis"/>
    <property type="evidence" value="ECO:0000318"/>
    <property type="project" value="GO_Central"/>
</dbReference>
<dbReference type="GO" id="GO:0007264">
    <property type="term" value="P:small GTPase-mediated signal transduction"/>
    <property type="evidence" value="ECO:0000316"/>
    <property type="project" value="SGD"/>
</dbReference>
<dbReference type="CDD" id="cd04435">
    <property type="entry name" value="DEP_fRom2"/>
    <property type="match status" value="1"/>
</dbReference>
<dbReference type="CDD" id="cd00160">
    <property type="entry name" value="RhoGEF"/>
    <property type="match status" value="1"/>
</dbReference>
<dbReference type="FunFam" id="1.20.900.10:FF:000035">
    <property type="entry name" value="Rho guanyl nucleotide exchange factor"/>
    <property type="match status" value="1"/>
</dbReference>
<dbReference type="FunFam" id="1.10.10.10:FF:000797">
    <property type="entry name" value="RHO1 GDP-GTP exchange protein 1"/>
    <property type="match status" value="1"/>
</dbReference>
<dbReference type="FunFam" id="2.30.29.30:FF:000405">
    <property type="entry name" value="RHO1 GDP-GTP exchange protein 2"/>
    <property type="match status" value="1"/>
</dbReference>
<dbReference type="Gene3D" id="1.20.900.10">
    <property type="entry name" value="Dbl homology (DH) domain"/>
    <property type="match status" value="1"/>
</dbReference>
<dbReference type="Gene3D" id="2.30.29.30">
    <property type="entry name" value="Pleckstrin-homology domain (PH domain)/Phosphotyrosine-binding domain (PTB)"/>
    <property type="match status" value="1"/>
</dbReference>
<dbReference type="Gene3D" id="1.10.10.10">
    <property type="entry name" value="Winged helix-like DNA-binding domain superfamily/Winged helix DNA-binding domain"/>
    <property type="match status" value="1"/>
</dbReference>
<dbReference type="InterPro" id="IPR001180">
    <property type="entry name" value="CNH_dom"/>
</dbReference>
<dbReference type="InterPro" id="IPR035899">
    <property type="entry name" value="DBL_dom_sf"/>
</dbReference>
<dbReference type="InterPro" id="IPR000591">
    <property type="entry name" value="DEP_dom"/>
</dbReference>
<dbReference type="InterPro" id="IPR000219">
    <property type="entry name" value="DH_dom"/>
</dbReference>
<dbReference type="InterPro" id="IPR011993">
    <property type="entry name" value="PH-like_dom_sf"/>
</dbReference>
<dbReference type="InterPro" id="IPR041675">
    <property type="entry name" value="PH_5"/>
</dbReference>
<dbReference type="InterPro" id="IPR052233">
    <property type="entry name" value="Rho-type_GEFs"/>
</dbReference>
<dbReference type="InterPro" id="IPR036388">
    <property type="entry name" value="WH-like_DNA-bd_sf"/>
</dbReference>
<dbReference type="InterPro" id="IPR036390">
    <property type="entry name" value="WH_DNA-bd_sf"/>
</dbReference>
<dbReference type="PANTHER" id="PTHR46572">
    <property type="entry name" value="RHO1 GDP-GTP EXCHANGE PROTEIN 1-RELATED"/>
    <property type="match status" value="1"/>
</dbReference>
<dbReference type="PANTHER" id="PTHR46572:SF2">
    <property type="entry name" value="RHO1 GDP-GTP EXCHANGE PROTEIN 1-RELATED"/>
    <property type="match status" value="1"/>
</dbReference>
<dbReference type="Pfam" id="PF00780">
    <property type="entry name" value="CNH"/>
    <property type="match status" value="1"/>
</dbReference>
<dbReference type="Pfam" id="PF00610">
    <property type="entry name" value="DEP"/>
    <property type="match status" value="1"/>
</dbReference>
<dbReference type="Pfam" id="PF15405">
    <property type="entry name" value="PH_5"/>
    <property type="match status" value="1"/>
</dbReference>
<dbReference type="Pfam" id="PF00621">
    <property type="entry name" value="RhoGEF"/>
    <property type="match status" value="1"/>
</dbReference>
<dbReference type="SMART" id="SM00036">
    <property type="entry name" value="CNH"/>
    <property type="match status" value="1"/>
</dbReference>
<dbReference type="SMART" id="SM00049">
    <property type="entry name" value="DEP"/>
    <property type="match status" value="1"/>
</dbReference>
<dbReference type="SMART" id="SM00325">
    <property type="entry name" value="RhoGEF"/>
    <property type="match status" value="1"/>
</dbReference>
<dbReference type="SUPFAM" id="SSF48065">
    <property type="entry name" value="DBL homology domain (DH-domain)"/>
    <property type="match status" value="1"/>
</dbReference>
<dbReference type="SUPFAM" id="SSF50729">
    <property type="entry name" value="PH domain-like"/>
    <property type="match status" value="1"/>
</dbReference>
<dbReference type="SUPFAM" id="SSF46785">
    <property type="entry name" value="Winged helix' DNA-binding domain"/>
    <property type="match status" value="1"/>
</dbReference>
<dbReference type="PROSITE" id="PS50219">
    <property type="entry name" value="CNH"/>
    <property type="match status" value="1"/>
</dbReference>
<dbReference type="PROSITE" id="PS50010">
    <property type="entry name" value="DH_2"/>
    <property type="match status" value="1"/>
</dbReference>
<sequence length="1155" mass="131420">MNSNELDLRNKYFYEIFGKKRKSDTSTPTQLFSGSKVQTNINEISITNDEDEDSTEDENKASLKDYTLGHDTGARYRIAPDCSSHQLKASPVLHISTNLNSSPQSFTGDQISPTNKKISINDSTRQDKGNSCTTTSSPSQKRSNVLLPHVRKHSSPSLLSFSKNSGSHMGDPNQLSTPPTPKSAGHTMELHSSFNGKHSSSSTSSLFALESLKTQNRRSSNSSNHSSQYRRHTNQHQRHHSRSKSSPVSLTEISMIKGTPLVYPALLSLIAIKFKQTIKLSTHKKMGLLYRDSFTGKQAIDTLCLIIGSLDRNLGMLIGKSLEAQKLFHDVLYDHGVRDSVLEIYELSSESIFMAHQSQSSTSIANTFSSSSSSVNSLRTKTEIYGVFVPLTHCYSSTCSLEKLCYSISCPNRLQQQANLHLKLGGGLKRNISLALDKEDDERISWTNSVPKSVWESLSKQQIKRQEAIYELFTTEKKFVKSLEIIRDTFMKKLLETNIIPSDVRINFVKHVFAHINEIYSVNREFLKALAQRQSLSPICPGIADIFLQYLPFFDPFLSYIASRPYAKYLIETQRSVNPNFARFDDEVSNSSLRHGIDSFLSQGVSRPGRYSLLVREIIHFSDPVTDKDDLQMLMKVQDLLKDLMKRIDRASGAAQDRYDVKVLKQKILFKNEYVNLGLNNEKRKIKHEGLLSRKDVNKTDASFSGDIQFYLLDNMLLFLKSKAVNKWHQHTVFQRPIPLPLLFICPAEDMPPIKRYVTENPNCSAGVLLPQYQTSNPKNAIVFAYYGTKQQYQVTLYAPQPAGLQTLIEKVKQEQKRLLDETKHITFKQMVGQFFHSYINTNRVNDVLICHAGKILLVATNMGLFVLNYATSINQKPVHLLHKISISQISVLEEYKVMILLIDKKLYGCPLDVIDDAENADFLFRKNSKVLFKYVAMFKDGFCNGKRIIMIAHHFLHAVQLLIVNPLIFDFNSGNFKKNLKAGLVDFSVDSEPLSFSFLENKICIGCKKNIKILNVPEVCDKNGFKMRELLNLHDNKVLANMYKETFKVVSMFPIKNSTFACFPELCFFLNKQGKREETKGCFHWEGEPEQFACSYPYIVAINSNFIEIRHIENGELVRCVLGNKIRMLKSYAKKILYCYEDPQGFEIIELLNF</sequence>
<organism>
    <name type="scientific">Saccharomyces cerevisiae (strain ATCC 204508 / S288c)</name>
    <name type="common">Baker's yeast</name>
    <dbReference type="NCBI Taxonomy" id="559292"/>
    <lineage>
        <taxon>Eukaryota</taxon>
        <taxon>Fungi</taxon>
        <taxon>Dikarya</taxon>
        <taxon>Ascomycota</taxon>
        <taxon>Saccharomycotina</taxon>
        <taxon>Saccharomycetes</taxon>
        <taxon>Saccharomycetales</taxon>
        <taxon>Saccharomycetaceae</taxon>
        <taxon>Saccharomyces</taxon>
    </lineage>
</organism>
<name>ROM1_YEAST</name>
<keyword id="KW-0007">Acetylation</keyword>
<keyword id="KW-0344">Guanine-nucleotide releasing factor</keyword>
<keyword id="KW-0597">Phosphoprotein</keyword>
<keyword id="KW-1185">Reference proteome</keyword>
<proteinExistence type="evidence at protein level"/>